<organism>
    <name type="scientific">Enterobacter sp. (strain 638)</name>
    <dbReference type="NCBI Taxonomy" id="399742"/>
    <lineage>
        <taxon>Bacteria</taxon>
        <taxon>Pseudomonadati</taxon>
        <taxon>Pseudomonadota</taxon>
        <taxon>Gammaproteobacteria</taxon>
        <taxon>Enterobacterales</taxon>
        <taxon>Enterobacteriaceae</taxon>
        <taxon>Enterobacter</taxon>
    </lineage>
</organism>
<evidence type="ECO:0000255" key="1">
    <source>
        <dbReference type="HAMAP-Rule" id="MF_00052"/>
    </source>
</evidence>
<evidence type="ECO:0000255" key="2">
    <source>
        <dbReference type="PROSITE-ProRule" id="PRU01319"/>
    </source>
</evidence>
<comment type="function">
    <text evidence="1">Endonuclease that specifically degrades the RNA of RNA-DNA hybrids.</text>
</comment>
<comment type="catalytic activity">
    <reaction evidence="1">
        <text>Endonucleolytic cleavage to 5'-phosphomonoester.</text>
        <dbReference type="EC" id="3.1.26.4"/>
    </reaction>
</comment>
<comment type="cofactor">
    <cofactor evidence="1">
        <name>Mn(2+)</name>
        <dbReference type="ChEBI" id="CHEBI:29035"/>
    </cofactor>
    <cofactor evidence="1">
        <name>Mg(2+)</name>
        <dbReference type="ChEBI" id="CHEBI:18420"/>
    </cofactor>
    <text evidence="1">Manganese or magnesium. Binds 1 divalent metal ion per monomer in the absence of substrate. May bind a second metal ion after substrate binding.</text>
</comment>
<comment type="subcellular location">
    <subcellularLocation>
        <location evidence="1">Cytoplasm</location>
    </subcellularLocation>
</comment>
<comment type="similarity">
    <text evidence="1">Belongs to the RNase HII family.</text>
</comment>
<feature type="chain" id="PRO_1000057378" description="Ribonuclease HII">
    <location>
        <begin position="1"/>
        <end position="198"/>
    </location>
</feature>
<feature type="domain" description="RNase H type-2" evidence="2">
    <location>
        <begin position="10"/>
        <end position="198"/>
    </location>
</feature>
<feature type="binding site" evidence="1">
    <location>
        <position position="16"/>
    </location>
    <ligand>
        <name>a divalent metal cation</name>
        <dbReference type="ChEBI" id="CHEBI:60240"/>
    </ligand>
</feature>
<feature type="binding site" evidence="1">
    <location>
        <position position="17"/>
    </location>
    <ligand>
        <name>a divalent metal cation</name>
        <dbReference type="ChEBI" id="CHEBI:60240"/>
    </ligand>
</feature>
<feature type="binding site" evidence="1">
    <location>
        <position position="108"/>
    </location>
    <ligand>
        <name>a divalent metal cation</name>
        <dbReference type="ChEBI" id="CHEBI:60240"/>
    </ligand>
</feature>
<accession>A4W6S8</accession>
<name>RNH2_ENT38</name>
<protein>
    <recommendedName>
        <fullName evidence="1">Ribonuclease HII</fullName>
        <shortName evidence="1">RNase HII</shortName>
        <ecNumber evidence="1">3.1.26.4</ecNumber>
    </recommendedName>
</protein>
<reference key="1">
    <citation type="journal article" date="2010" name="PLoS Genet.">
        <title>Genome sequence of the plant growth promoting endophytic bacterium Enterobacter sp. 638.</title>
        <authorList>
            <person name="Taghavi S."/>
            <person name="van der Lelie D."/>
            <person name="Hoffman A."/>
            <person name="Zhang Y.B."/>
            <person name="Walla M.D."/>
            <person name="Vangronsveld J."/>
            <person name="Newman L."/>
            <person name="Monchy S."/>
        </authorList>
    </citation>
    <scope>NUCLEOTIDE SEQUENCE [LARGE SCALE GENOMIC DNA]</scope>
    <source>
        <strain>638</strain>
    </source>
</reference>
<gene>
    <name evidence="1" type="primary">rnhB</name>
    <name type="ordered locus">Ent638_0721</name>
</gene>
<keyword id="KW-0963">Cytoplasm</keyword>
<keyword id="KW-0255">Endonuclease</keyword>
<keyword id="KW-0378">Hydrolase</keyword>
<keyword id="KW-0464">Manganese</keyword>
<keyword id="KW-0479">Metal-binding</keyword>
<keyword id="KW-0540">Nuclease</keyword>
<proteinExistence type="inferred from homology"/>
<dbReference type="EC" id="3.1.26.4" evidence="1"/>
<dbReference type="EMBL" id="CP000653">
    <property type="protein sequence ID" value="ABP59408.1"/>
    <property type="molecule type" value="Genomic_DNA"/>
</dbReference>
<dbReference type="RefSeq" id="WP_012016129.1">
    <property type="nucleotide sequence ID" value="NC_009436.1"/>
</dbReference>
<dbReference type="SMR" id="A4W6S8"/>
<dbReference type="STRING" id="399742.Ent638_0721"/>
<dbReference type="KEGG" id="ent:Ent638_0721"/>
<dbReference type="eggNOG" id="COG0164">
    <property type="taxonomic scope" value="Bacteria"/>
</dbReference>
<dbReference type="HOGENOM" id="CLU_036532_3_2_6"/>
<dbReference type="OrthoDB" id="9803420at2"/>
<dbReference type="Proteomes" id="UP000000230">
    <property type="component" value="Chromosome"/>
</dbReference>
<dbReference type="GO" id="GO:0005737">
    <property type="term" value="C:cytoplasm"/>
    <property type="evidence" value="ECO:0007669"/>
    <property type="project" value="UniProtKB-SubCell"/>
</dbReference>
<dbReference type="GO" id="GO:0032299">
    <property type="term" value="C:ribonuclease H2 complex"/>
    <property type="evidence" value="ECO:0007669"/>
    <property type="project" value="TreeGrafter"/>
</dbReference>
<dbReference type="GO" id="GO:0030145">
    <property type="term" value="F:manganese ion binding"/>
    <property type="evidence" value="ECO:0007669"/>
    <property type="project" value="UniProtKB-UniRule"/>
</dbReference>
<dbReference type="GO" id="GO:0003723">
    <property type="term" value="F:RNA binding"/>
    <property type="evidence" value="ECO:0007669"/>
    <property type="project" value="InterPro"/>
</dbReference>
<dbReference type="GO" id="GO:0004523">
    <property type="term" value="F:RNA-DNA hybrid ribonuclease activity"/>
    <property type="evidence" value="ECO:0007669"/>
    <property type="project" value="UniProtKB-UniRule"/>
</dbReference>
<dbReference type="GO" id="GO:0043137">
    <property type="term" value="P:DNA replication, removal of RNA primer"/>
    <property type="evidence" value="ECO:0007669"/>
    <property type="project" value="TreeGrafter"/>
</dbReference>
<dbReference type="GO" id="GO:0006298">
    <property type="term" value="P:mismatch repair"/>
    <property type="evidence" value="ECO:0007669"/>
    <property type="project" value="TreeGrafter"/>
</dbReference>
<dbReference type="CDD" id="cd07182">
    <property type="entry name" value="RNase_HII_bacteria_HII_like"/>
    <property type="match status" value="1"/>
</dbReference>
<dbReference type="FunFam" id="3.30.420.10:FF:000006">
    <property type="entry name" value="Ribonuclease HII"/>
    <property type="match status" value="1"/>
</dbReference>
<dbReference type="Gene3D" id="3.30.420.10">
    <property type="entry name" value="Ribonuclease H-like superfamily/Ribonuclease H"/>
    <property type="match status" value="1"/>
</dbReference>
<dbReference type="HAMAP" id="MF_00052_B">
    <property type="entry name" value="RNase_HII_B"/>
    <property type="match status" value="1"/>
</dbReference>
<dbReference type="InterPro" id="IPR022898">
    <property type="entry name" value="RNase_HII"/>
</dbReference>
<dbReference type="InterPro" id="IPR001352">
    <property type="entry name" value="RNase_HII/HIII"/>
</dbReference>
<dbReference type="InterPro" id="IPR024567">
    <property type="entry name" value="RNase_HII/HIII_dom"/>
</dbReference>
<dbReference type="InterPro" id="IPR012337">
    <property type="entry name" value="RNaseH-like_sf"/>
</dbReference>
<dbReference type="InterPro" id="IPR036397">
    <property type="entry name" value="RNaseH_sf"/>
</dbReference>
<dbReference type="NCBIfam" id="NF000594">
    <property type="entry name" value="PRK00015.1-1"/>
    <property type="match status" value="1"/>
</dbReference>
<dbReference type="NCBIfam" id="NF000595">
    <property type="entry name" value="PRK00015.1-3"/>
    <property type="match status" value="1"/>
</dbReference>
<dbReference type="NCBIfam" id="NF000596">
    <property type="entry name" value="PRK00015.1-4"/>
    <property type="match status" value="1"/>
</dbReference>
<dbReference type="PANTHER" id="PTHR10954">
    <property type="entry name" value="RIBONUCLEASE H2 SUBUNIT A"/>
    <property type="match status" value="1"/>
</dbReference>
<dbReference type="PANTHER" id="PTHR10954:SF18">
    <property type="entry name" value="RIBONUCLEASE HII"/>
    <property type="match status" value="1"/>
</dbReference>
<dbReference type="Pfam" id="PF01351">
    <property type="entry name" value="RNase_HII"/>
    <property type="match status" value="1"/>
</dbReference>
<dbReference type="SUPFAM" id="SSF53098">
    <property type="entry name" value="Ribonuclease H-like"/>
    <property type="match status" value="1"/>
</dbReference>
<dbReference type="PROSITE" id="PS51975">
    <property type="entry name" value="RNASE_H_2"/>
    <property type="match status" value="1"/>
</dbReference>
<sequence length="198" mass="21592">MIEFVYPHTHLVAGVDEVGRGPLVGAVVTAAVILDPARPIVGLNDSKKLSEKRRLALFDEIKEKALAWSLGRAEPEEIDELNILHATMLAMQRAVAGLKIVPEYVLIDGNRCPALPMRSLAVVKGDSRVAEISAASIIAKVTRDAEMAALDLSYPQYGFAQHKGYPTAFHLEKLSEHGPTEHHRRSFGPVKRALGLVC</sequence>